<feature type="chain" id="PRO_1000186626" description="7-cyano-7-deazaguanine synthase">
    <location>
        <begin position="1"/>
        <end position="237"/>
    </location>
</feature>
<feature type="binding site" evidence="1">
    <location>
        <begin position="14"/>
        <end position="24"/>
    </location>
    <ligand>
        <name>ATP</name>
        <dbReference type="ChEBI" id="CHEBI:30616"/>
    </ligand>
</feature>
<feature type="binding site" evidence="1">
    <location>
        <position position="202"/>
    </location>
    <ligand>
        <name>Zn(2+)</name>
        <dbReference type="ChEBI" id="CHEBI:29105"/>
    </ligand>
</feature>
<feature type="binding site" evidence="1">
    <location>
        <position position="217"/>
    </location>
    <ligand>
        <name>Zn(2+)</name>
        <dbReference type="ChEBI" id="CHEBI:29105"/>
    </ligand>
</feature>
<feature type="binding site" evidence="1">
    <location>
        <position position="220"/>
    </location>
    <ligand>
        <name>Zn(2+)</name>
        <dbReference type="ChEBI" id="CHEBI:29105"/>
    </ligand>
</feature>
<feature type="binding site" evidence="1">
    <location>
        <position position="223"/>
    </location>
    <ligand>
        <name>Zn(2+)</name>
        <dbReference type="ChEBI" id="CHEBI:29105"/>
    </ligand>
</feature>
<organism>
    <name type="scientific">Rhodopseudomonas palustris (strain TIE-1)</name>
    <dbReference type="NCBI Taxonomy" id="395960"/>
    <lineage>
        <taxon>Bacteria</taxon>
        <taxon>Pseudomonadati</taxon>
        <taxon>Pseudomonadota</taxon>
        <taxon>Alphaproteobacteria</taxon>
        <taxon>Hyphomicrobiales</taxon>
        <taxon>Nitrobacteraceae</taxon>
        <taxon>Rhodopseudomonas</taxon>
    </lineage>
</organism>
<keyword id="KW-0067">ATP-binding</keyword>
<keyword id="KW-0436">Ligase</keyword>
<keyword id="KW-0479">Metal-binding</keyword>
<keyword id="KW-0547">Nucleotide-binding</keyword>
<keyword id="KW-0671">Queuosine biosynthesis</keyword>
<keyword id="KW-0862">Zinc</keyword>
<proteinExistence type="inferred from homology"/>
<sequence length="237" mass="25937">MTDHSSDKTALVLFSGGQDSATCLAWALARFARVETIGFDYGQRHLIELECRARLLDGFRAISDDWAAKLGDNHTLTIPTLAEISDTALTRDVAIAMGADGLPNTFVPGRNLIFLNFAAALAYRRGITDIVGGMCETDYSGYPDCRNDTIQALQTALSLGMARDITLHTPLMWRDKAATWQLAQDLGGDALVDLIREDSHTCYLGERGARHDWGYGCGECPACRLRSKGWIEYASGI</sequence>
<protein>
    <recommendedName>
        <fullName evidence="1">7-cyano-7-deazaguanine synthase</fullName>
        <ecNumber evidence="1">6.3.4.20</ecNumber>
    </recommendedName>
    <alternativeName>
        <fullName evidence="1">7-cyano-7-carbaguanine synthase</fullName>
    </alternativeName>
    <alternativeName>
        <fullName evidence="1">PreQ(0) synthase</fullName>
    </alternativeName>
    <alternativeName>
        <fullName evidence="1">Queuosine biosynthesis protein QueC</fullName>
    </alternativeName>
</protein>
<evidence type="ECO:0000255" key="1">
    <source>
        <dbReference type="HAMAP-Rule" id="MF_01633"/>
    </source>
</evidence>
<dbReference type="EC" id="6.3.4.20" evidence="1"/>
<dbReference type="EMBL" id="CP001096">
    <property type="protein sequence ID" value="ACF01654.1"/>
    <property type="molecule type" value="Genomic_DNA"/>
</dbReference>
<dbReference type="RefSeq" id="WP_012496268.1">
    <property type="nucleotide sequence ID" value="NC_011004.1"/>
</dbReference>
<dbReference type="SMR" id="B3QKK5"/>
<dbReference type="KEGG" id="rpt:Rpal_3150"/>
<dbReference type="HOGENOM" id="CLU_081854_0_0_5"/>
<dbReference type="OrthoDB" id="9789567at2"/>
<dbReference type="UniPathway" id="UPA00391"/>
<dbReference type="Proteomes" id="UP000001725">
    <property type="component" value="Chromosome"/>
</dbReference>
<dbReference type="GO" id="GO:0005524">
    <property type="term" value="F:ATP binding"/>
    <property type="evidence" value="ECO:0007669"/>
    <property type="project" value="UniProtKB-UniRule"/>
</dbReference>
<dbReference type="GO" id="GO:0016879">
    <property type="term" value="F:ligase activity, forming carbon-nitrogen bonds"/>
    <property type="evidence" value="ECO:0007669"/>
    <property type="project" value="UniProtKB-UniRule"/>
</dbReference>
<dbReference type="GO" id="GO:0008270">
    <property type="term" value="F:zinc ion binding"/>
    <property type="evidence" value="ECO:0007669"/>
    <property type="project" value="UniProtKB-UniRule"/>
</dbReference>
<dbReference type="GO" id="GO:0008616">
    <property type="term" value="P:queuosine biosynthetic process"/>
    <property type="evidence" value="ECO:0007669"/>
    <property type="project" value="UniProtKB-UniRule"/>
</dbReference>
<dbReference type="CDD" id="cd01995">
    <property type="entry name" value="QueC-like"/>
    <property type="match status" value="1"/>
</dbReference>
<dbReference type="Gene3D" id="3.40.50.620">
    <property type="entry name" value="HUPs"/>
    <property type="match status" value="1"/>
</dbReference>
<dbReference type="HAMAP" id="MF_01633">
    <property type="entry name" value="QueC"/>
    <property type="match status" value="1"/>
</dbReference>
<dbReference type="InterPro" id="IPR018317">
    <property type="entry name" value="QueC"/>
</dbReference>
<dbReference type="InterPro" id="IPR014729">
    <property type="entry name" value="Rossmann-like_a/b/a_fold"/>
</dbReference>
<dbReference type="NCBIfam" id="TIGR00364">
    <property type="entry name" value="7-cyano-7-deazaguanine synthase QueC"/>
    <property type="match status" value="1"/>
</dbReference>
<dbReference type="PANTHER" id="PTHR42914">
    <property type="entry name" value="7-CYANO-7-DEAZAGUANINE SYNTHASE"/>
    <property type="match status" value="1"/>
</dbReference>
<dbReference type="PANTHER" id="PTHR42914:SF1">
    <property type="entry name" value="7-CYANO-7-DEAZAGUANINE SYNTHASE"/>
    <property type="match status" value="1"/>
</dbReference>
<dbReference type="Pfam" id="PF06508">
    <property type="entry name" value="QueC"/>
    <property type="match status" value="1"/>
</dbReference>
<dbReference type="PIRSF" id="PIRSF006293">
    <property type="entry name" value="ExsB"/>
    <property type="match status" value="1"/>
</dbReference>
<dbReference type="SUPFAM" id="SSF52402">
    <property type="entry name" value="Adenine nucleotide alpha hydrolases-like"/>
    <property type="match status" value="1"/>
</dbReference>
<reference key="1">
    <citation type="submission" date="2008-05" db="EMBL/GenBank/DDBJ databases">
        <title>Complete sequence of Rhodopseudomonas palustris TIE-1.</title>
        <authorList>
            <consortium name="US DOE Joint Genome Institute"/>
            <person name="Lucas S."/>
            <person name="Copeland A."/>
            <person name="Lapidus A."/>
            <person name="Glavina del Rio T."/>
            <person name="Dalin E."/>
            <person name="Tice H."/>
            <person name="Pitluck S."/>
            <person name="Chain P."/>
            <person name="Malfatti S."/>
            <person name="Shin M."/>
            <person name="Vergez L."/>
            <person name="Lang D."/>
            <person name="Schmutz J."/>
            <person name="Larimer F."/>
            <person name="Land M."/>
            <person name="Hauser L."/>
            <person name="Kyrpides N."/>
            <person name="Mikhailova N."/>
            <person name="Emerson D."/>
            <person name="Newman D.K."/>
            <person name="Roden E."/>
            <person name="Richardson P."/>
        </authorList>
    </citation>
    <scope>NUCLEOTIDE SEQUENCE [LARGE SCALE GENOMIC DNA]</scope>
    <source>
        <strain>TIE-1</strain>
    </source>
</reference>
<accession>B3QKK5</accession>
<gene>
    <name evidence="1" type="primary">queC</name>
    <name type="ordered locus">Rpal_3150</name>
</gene>
<comment type="function">
    <text evidence="1">Catalyzes the ATP-dependent conversion of 7-carboxy-7-deazaguanine (CDG) to 7-cyano-7-deazaguanine (preQ(0)).</text>
</comment>
<comment type="catalytic activity">
    <reaction evidence="1">
        <text>7-carboxy-7-deazaguanine + NH4(+) + ATP = 7-cyano-7-deazaguanine + ADP + phosphate + H2O + H(+)</text>
        <dbReference type="Rhea" id="RHEA:27982"/>
        <dbReference type="ChEBI" id="CHEBI:15377"/>
        <dbReference type="ChEBI" id="CHEBI:15378"/>
        <dbReference type="ChEBI" id="CHEBI:28938"/>
        <dbReference type="ChEBI" id="CHEBI:30616"/>
        <dbReference type="ChEBI" id="CHEBI:43474"/>
        <dbReference type="ChEBI" id="CHEBI:45075"/>
        <dbReference type="ChEBI" id="CHEBI:61036"/>
        <dbReference type="ChEBI" id="CHEBI:456216"/>
        <dbReference type="EC" id="6.3.4.20"/>
    </reaction>
</comment>
<comment type="cofactor">
    <cofactor evidence="1">
        <name>Zn(2+)</name>
        <dbReference type="ChEBI" id="CHEBI:29105"/>
    </cofactor>
    <text evidence="1">Binds 1 zinc ion per subunit.</text>
</comment>
<comment type="pathway">
    <text evidence="1">Purine metabolism; 7-cyano-7-deazaguanine biosynthesis.</text>
</comment>
<comment type="similarity">
    <text evidence="1">Belongs to the QueC family.</text>
</comment>
<name>QUEC_RHOPT</name>